<feature type="chain" id="PRO_0000211437" description="Vacuolar-sorting protein SNF7">
    <location>
        <begin position="1"/>
        <end position="226"/>
    </location>
</feature>
<feature type="region of interest" description="Disordered" evidence="3">
    <location>
        <begin position="168"/>
        <end position="226"/>
    </location>
</feature>
<feature type="coiled-coil region" evidence="2">
    <location>
        <begin position="18"/>
        <end position="182"/>
    </location>
</feature>
<feature type="compositionally biased region" description="Basic and acidic residues" evidence="3">
    <location>
        <begin position="168"/>
        <end position="179"/>
    </location>
</feature>
<accession>Q5ABD0</accession>
<accession>A0A1D8PCA5</accession>
<gene>
    <name type="primary">SNF7</name>
    <name type="synonym">VPS32</name>
    <name type="ordered locus">CAALFM_C100650CA</name>
    <name type="ORF">CaO19.13461</name>
    <name type="ORF">CaO19.6040</name>
</gene>
<name>SNF7_CANAL</name>
<proteinExistence type="inferred from homology"/>
<comment type="function">
    <text evidence="4">Required for the sorting and concentration of proteins resulting in the entry of these proteins into the invaginating vesicles of the multivesicular body (MVB). Also required for the proteolytic cleavage of the transcription factor RIM101 in response to alkaline ambient pH.</text>
</comment>
<comment type="subunit">
    <text evidence="1">A component of the endosomal sorting required for transport complex III (ESCRT-III).</text>
</comment>
<comment type="subcellular location">
    <subcellularLocation>
        <location evidence="1">Cytoplasm</location>
    </subcellularLocation>
    <subcellularLocation>
        <location evidence="1">Endosome membrane</location>
        <topology evidence="1">Peripheral membrane protein</topology>
    </subcellularLocation>
</comment>
<comment type="similarity">
    <text evidence="5">Belongs to the SNF7 family.</text>
</comment>
<dbReference type="EMBL" id="CP017623">
    <property type="protein sequence ID" value="AOW25763.1"/>
    <property type="molecule type" value="Genomic_DNA"/>
</dbReference>
<dbReference type="RefSeq" id="XP_719002.1">
    <property type="nucleotide sequence ID" value="XM_713909.1"/>
</dbReference>
<dbReference type="SMR" id="Q5ABD0"/>
<dbReference type="BioGRID" id="1222471">
    <property type="interactions" value="1"/>
</dbReference>
<dbReference type="FunCoup" id="Q5ABD0">
    <property type="interactions" value="709"/>
</dbReference>
<dbReference type="STRING" id="237561.Q5ABD0"/>
<dbReference type="EnsemblFungi" id="C1_00650C_A-T">
    <property type="protein sequence ID" value="C1_00650C_A-T-p1"/>
    <property type="gene ID" value="C1_00650C_A"/>
</dbReference>
<dbReference type="GeneID" id="3639377"/>
<dbReference type="KEGG" id="cal:CAALFM_C100650CA"/>
<dbReference type="CGD" id="CAL0000187201">
    <property type="gene designation" value="SNF7"/>
</dbReference>
<dbReference type="VEuPathDB" id="FungiDB:C1_00650C_A"/>
<dbReference type="eggNOG" id="KOG1656">
    <property type="taxonomic scope" value="Eukaryota"/>
</dbReference>
<dbReference type="HOGENOM" id="CLU_071097_1_0_1"/>
<dbReference type="InParanoid" id="Q5ABD0"/>
<dbReference type="OMA" id="MKQIHGG"/>
<dbReference type="OrthoDB" id="5592979at2759"/>
<dbReference type="PRO" id="PR:Q5ABD0"/>
<dbReference type="Proteomes" id="UP000000559">
    <property type="component" value="Chromosome 1"/>
</dbReference>
<dbReference type="GO" id="GO:0009898">
    <property type="term" value="C:cytoplasmic side of plasma membrane"/>
    <property type="evidence" value="ECO:0000318"/>
    <property type="project" value="GO_Central"/>
</dbReference>
<dbReference type="GO" id="GO:0000815">
    <property type="term" value="C:ESCRT III complex"/>
    <property type="evidence" value="ECO:0000314"/>
    <property type="project" value="CGD"/>
</dbReference>
<dbReference type="GO" id="GO:0005771">
    <property type="term" value="C:multivesicular body"/>
    <property type="evidence" value="ECO:0000318"/>
    <property type="project" value="GO_Central"/>
</dbReference>
<dbReference type="GO" id="GO:0071285">
    <property type="term" value="P:cellular response to lithium ion"/>
    <property type="evidence" value="ECO:0000315"/>
    <property type="project" value="CGD"/>
</dbReference>
<dbReference type="GO" id="GO:0071467">
    <property type="term" value="P:cellular response to pH"/>
    <property type="evidence" value="ECO:0000315"/>
    <property type="project" value="CGD"/>
</dbReference>
<dbReference type="GO" id="GO:0030447">
    <property type="term" value="P:filamentous growth"/>
    <property type="evidence" value="ECO:0000315"/>
    <property type="project" value="CGD"/>
</dbReference>
<dbReference type="GO" id="GO:0044182">
    <property type="term" value="P:filamentous growth of a population of unicellular organisms"/>
    <property type="evidence" value="ECO:0000315"/>
    <property type="project" value="CGD"/>
</dbReference>
<dbReference type="GO" id="GO:0036178">
    <property type="term" value="P:filamentous growth of a population of unicellular organisms in response to neutral pH"/>
    <property type="evidence" value="ECO:0000315"/>
    <property type="project" value="CGD"/>
</dbReference>
<dbReference type="GO" id="GO:0036177">
    <property type="term" value="P:filamentous growth of a population of unicellular organisms in response to pH"/>
    <property type="evidence" value="ECO:0000315"/>
    <property type="project" value="CGD"/>
</dbReference>
<dbReference type="GO" id="GO:0031505">
    <property type="term" value="P:fungal-type cell wall organization"/>
    <property type="evidence" value="ECO:0000315"/>
    <property type="project" value="CGD"/>
</dbReference>
<dbReference type="GO" id="GO:0045324">
    <property type="term" value="P:late endosome to vacuole transport"/>
    <property type="evidence" value="ECO:0000315"/>
    <property type="project" value="CGD"/>
</dbReference>
<dbReference type="GO" id="GO:0032511">
    <property type="term" value="P:late endosome to vacuole transport via multivesicular body sorting pathway"/>
    <property type="evidence" value="ECO:0000318"/>
    <property type="project" value="GO_Central"/>
</dbReference>
<dbReference type="GO" id="GO:0016485">
    <property type="term" value="P:protein processing"/>
    <property type="evidence" value="ECO:0000315"/>
    <property type="project" value="CGD"/>
</dbReference>
<dbReference type="GO" id="GO:0006623">
    <property type="term" value="P:protein targeting to vacuole"/>
    <property type="evidence" value="ECO:0000315"/>
    <property type="project" value="CGD"/>
</dbReference>
<dbReference type="GO" id="GO:0043328">
    <property type="term" value="P:protein transport to vacuole involved in ubiquitin-dependent protein catabolic process via the multivesicular body sorting pathway"/>
    <property type="evidence" value="ECO:0007669"/>
    <property type="project" value="EnsemblFungi"/>
</dbReference>
<dbReference type="GO" id="GO:0006900">
    <property type="term" value="P:vesicle budding from membrane"/>
    <property type="evidence" value="ECO:0000318"/>
    <property type="project" value="GO_Central"/>
</dbReference>
<dbReference type="FunFam" id="1.10.287.1060:FF:000012">
    <property type="entry name" value="Vacuolar sorting protein SNF7"/>
    <property type="match status" value="1"/>
</dbReference>
<dbReference type="Gene3D" id="6.10.250.1710">
    <property type="match status" value="1"/>
</dbReference>
<dbReference type="Gene3D" id="1.10.287.1060">
    <property type="entry name" value="ESAT-6-like"/>
    <property type="match status" value="1"/>
</dbReference>
<dbReference type="InterPro" id="IPR005024">
    <property type="entry name" value="Snf7_fam"/>
</dbReference>
<dbReference type="PANTHER" id="PTHR22761">
    <property type="entry name" value="CHARGED MULTIVESICULAR BODY PROTEIN"/>
    <property type="match status" value="1"/>
</dbReference>
<dbReference type="PANTHER" id="PTHR22761:SF10">
    <property type="entry name" value="GH13992P"/>
    <property type="match status" value="1"/>
</dbReference>
<dbReference type="Pfam" id="PF03357">
    <property type="entry name" value="Snf7"/>
    <property type="match status" value="1"/>
</dbReference>
<reference key="1">
    <citation type="journal article" date="2004" name="Proc. Natl. Acad. Sci. U.S.A.">
        <title>The diploid genome sequence of Candida albicans.</title>
        <authorList>
            <person name="Jones T."/>
            <person name="Federspiel N.A."/>
            <person name="Chibana H."/>
            <person name="Dungan J."/>
            <person name="Kalman S."/>
            <person name="Magee B.B."/>
            <person name="Newport G."/>
            <person name="Thorstenson Y.R."/>
            <person name="Agabian N."/>
            <person name="Magee P.T."/>
            <person name="Davis R.W."/>
            <person name="Scherer S."/>
        </authorList>
    </citation>
    <scope>NUCLEOTIDE SEQUENCE [LARGE SCALE GENOMIC DNA]</scope>
    <source>
        <strain>SC5314 / ATCC MYA-2876</strain>
    </source>
</reference>
<reference key="2">
    <citation type="journal article" date="2007" name="Genome Biol.">
        <title>Assembly of the Candida albicans genome into sixteen supercontigs aligned on the eight chromosomes.</title>
        <authorList>
            <person name="van het Hoog M."/>
            <person name="Rast T.J."/>
            <person name="Martchenko M."/>
            <person name="Grindle S."/>
            <person name="Dignard D."/>
            <person name="Hogues H."/>
            <person name="Cuomo C."/>
            <person name="Berriman M."/>
            <person name="Scherer S."/>
            <person name="Magee B.B."/>
            <person name="Whiteway M."/>
            <person name="Chibana H."/>
            <person name="Nantel A."/>
            <person name="Magee P.T."/>
        </authorList>
    </citation>
    <scope>GENOME REANNOTATION</scope>
    <source>
        <strain>SC5314 / ATCC MYA-2876</strain>
    </source>
</reference>
<reference key="3">
    <citation type="journal article" date="2013" name="Genome Biol.">
        <title>Assembly of a phased diploid Candida albicans genome facilitates allele-specific measurements and provides a simple model for repeat and indel structure.</title>
        <authorList>
            <person name="Muzzey D."/>
            <person name="Schwartz K."/>
            <person name="Weissman J.S."/>
            <person name="Sherlock G."/>
        </authorList>
    </citation>
    <scope>NUCLEOTIDE SEQUENCE [LARGE SCALE GENOMIC DNA]</scope>
    <scope>GENOME REANNOTATION</scope>
    <source>
        <strain>SC5314 / ATCC MYA-2876</strain>
    </source>
</reference>
<reference key="4">
    <citation type="journal article" date="2004" name="Eukaryot. Cell">
        <title>Snf7p, a component of the ESCRT-III protein complex, is an upstream member of the RIM101 pathway in Candida albicans.</title>
        <authorList>
            <person name="Kullas A.L."/>
            <person name="Li M."/>
            <person name="Davis D.A."/>
        </authorList>
    </citation>
    <scope>FUNCTION</scope>
</reference>
<evidence type="ECO:0000250" key="1"/>
<evidence type="ECO:0000255" key="2"/>
<evidence type="ECO:0000256" key="3">
    <source>
        <dbReference type="SAM" id="MobiDB-lite"/>
    </source>
</evidence>
<evidence type="ECO:0000269" key="4">
    <source>
    </source>
</evidence>
<evidence type="ECO:0000305" key="5"/>
<keyword id="KW-0175">Coiled coil</keyword>
<keyword id="KW-0963">Cytoplasm</keyword>
<keyword id="KW-0967">Endosome</keyword>
<keyword id="KW-0472">Membrane</keyword>
<keyword id="KW-1185">Reference proteome</keyword>
<sequence length="226" mass="25890">MWGYFFGGNSQQKKDLPKKAIVELREHIQTLNKKKNHLQQQMDDQDQLARKYVSSKQTTLAKSALKRKKGYESNLLKVENQIETLETQLISIEGANLNLETMKAMKQGAKAMKQIHGEYDVDKVEDTMDEIREQVELADEISEAISRPVGNEFVDEDELDEELKELEAEAKEQEQEHRVPAQKAKPQPVSREEELPQFPSVNKKAPVVEEDEDEEALKALQAEMGL</sequence>
<protein>
    <recommendedName>
        <fullName>Vacuolar-sorting protein SNF7</fullName>
    </recommendedName>
    <alternativeName>
        <fullName>Vacuolar protein-sorting-associated protein 32</fullName>
    </alternativeName>
</protein>
<organism>
    <name type="scientific">Candida albicans (strain SC5314 / ATCC MYA-2876)</name>
    <name type="common">Yeast</name>
    <dbReference type="NCBI Taxonomy" id="237561"/>
    <lineage>
        <taxon>Eukaryota</taxon>
        <taxon>Fungi</taxon>
        <taxon>Dikarya</taxon>
        <taxon>Ascomycota</taxon>
        <taxon>Saccharomycotina</taxon>
        <taxon>Pichiomycetes</taxon>
        <taxon>Debaryomycetaceae</taxon>
        <taxon>Candida/Lodderomyces clade</taxon>
        <taxon>Candida</taxon>
    </lineage>
</organism>